<keyword id="KW-0007">Acetylation</keyword>
<keyword id="KW-0963">Cytoplasm</keyword>
<keyword id="KW-0238">DNA-binding</keyword>
<keyword id="KW-0539">Nucleus</keyword>
<keyword id="KW-1267">Proteomics identification</keyword>
<keyword id="KW-1185">Reference proteome</keyword>
<name>IER2_HUMAN</name>
<gene>
    <name evidence="10" type="primary">IER2</name>
    <name evidence="7" type="synonym">ETR101</name>
    <name evidence="8" type="synonym">PIP92</name>
</gene>
<dbReference type="EMBL" id="M62831">
    <property type="protein sequence ID" value="AAA35814.1"/>
    <property type="molecule type" value="mRNA"/>
</dbReference>
<dbReference type="EMBL" id="CR450352">
    <property type="protein sequence ID" value="CAG29348.1"/>
    <property type="molecule type" value="mRNA"/>
</dbReference>
<dbReference type="EMBL" id="BT019466">
    <property type="protein sequence ID" value="AAV38273.1"/>
    <property type="molecule type" value="mRNA"/>
</dbReference>
<dbReference type="EMBL" id="BC003625">
    <property type="protein sequence ID" value="AAH03625.1"/>
    <property type="molecule type" value="mRNA"/>
</dbReference>
<dbReference type="EMBL" id="BC072432">
    <property type="protein sequence ID" value="AAH72432.1"/>
    <property type="molecule type" value="mRNA"/>
</dbReference>
<dbReference type="EMBL" id="BC110647">
    <property type="protein sequence ID" value="AAI10648.1"/>
    <property type="molecule type" value="mRNA"/>
</dbReference>
<dbReference type="CCDS" id="CCDS12295.1"/>
<dbReference type="PIR" id="A40866">
    <property type="entry name" value="A40866"/>
</dbReference>
<dbReference type="RefSeq" id="NP_004898.2">
    <property type="nucleotide sequence ID" value="NM_004907.2"/>
</dbReference>
<dbReference type="SMR" id="Q9BTL4"/>
<dbReference type="BioGRID" id="114959">
    <property type="interactions" value="37"/>
</dbReference>
<dbReference type="FunCoup" id="Q9BTL4">
    <property type="interactions" value="1578"/>
</dbReference>
<dbReference type="IntAct" id="Q9BTL4">
    <property type="interactions" value="28"/>
</dbReference>
<dbReference type="STRING" id="9606.ENSP00000465617"/>
<dbReference type="GlyGen" id="Q9BTL4">
    <property type="glycosylation" value="1 site"/>
</dbReference>
<dbReference type="iPTMnet" id="Q9BTL4"/>
<dbReference type="PhosphoSitePlus" id="Q9BTL4"/>
<dbReference type="BioMuta" id="IER2"/>
<dbReference type="DMDM" id="73920026"/>
<dbReference type="jPOST" id="Q9BTL4"/>
<dbReference type="MassIVE" id="Q9BTL4"/>
<dbReference type="PaxDb" id="9606-ENSP00000465617"/>
<dbReference type="PeptideAtlas" id="Q9BTL4"/>
<dbReference type="ProteomicsDB" id="78996"/>
<dbReference type="Antibodypedia" id="13536">
    <property type="antibodies" value="116 antibodies from 21 providers"/>
</dbReference>
<dbReference type="DNASU" id="9592"/>
<dbReference type="Ensembl" id="ENST00000292433.4">
    <property type="protein sequence ID" value="ENSP00000292433.2"/>
    <property type="gene ID" value="ENSG00000160888.8"/>
</dbReference>
<dbReference type="Ensembl" id="ENST00000587885.2">
    <property type="protein sequence ID" value="ENSP00000467294.1"/>
    <property type="gene ID" value="ENSG00000160888.8"/>
</dbReference>
<dbReference type="Ensembl" id="ENST00000588173.2">
    <property type="protein sequence ID" value="ENSP00000465617.1"/>
    <property type="gene ID" value="ENSG00000160888.8"/>
</dbReference>
<dbReference type="GeneID" id="9592"/>
<dbReference type="KEGG" id="hsa:9592"/>
<dbReference type="MANE-Select" id="ENST00000292433.4">
    <property type="protein sequence ID" value="ENSP00000292433.2"/>
    <property type="RefSeq nucleotide sequence ID" value="NM_004907.3"/>
    <property type="RefSeq protein sequence ID" value="NP_004898.2"/>
</dbReference>
<dbReference type="UCSC" id="uc002mwr.4">
    <property type="organism name" value="human"/>
</dbReference>
<dbReference type="AGR" id="HGNC:28871"/>
<dbReference type="CTD" id="9592"/>
<dbReference type="DisGeNET" id="9592"/>
<dbReference type="GeneCards" id="IER2"/>
<dbReference type="HGNC" id="HGNC:28871">
    <property type="gene designation" value="IER2"/>
</dbReference>
<dbReference type="HPA" id="ENSG00000160888">
    <property type="expression patterns" value="Low tissue specificity"/>
</dbReference>
<dbReference type="MIM" id="620036">
    <property type="type" value="gene"/>
</dbReference>
<dbReference type="neXtProt" id="NX_Q9BTL4"/>
<dbReference type="OpenTargets" id="ENSG00000160888"/>
<dbReference type="PharmGKB" id="PA134982230"/>
<dbReference type="VEuPathDB" id="HostDB:ENSG00000160888"/>
<dbReference type="eggNOG" id="ENOG502S19F">
    <property type="taxonomic scope" value="Eukaryota"/>
</dbReference>
<dbReference type="GeneTree" id="ENSGT00900000141021"/>
<dbReference type="HOGENOM" id="CLU_1234685_0_0_1"/>
<dbReference type="InParanoid" id="Q9BTL4"/>
<dbReference type="OMA" id="MVMRSAR"/>
<dbReference type="OrthoDB" id="8937180at2759"/>
<dbReference type="PAN-GO" id="Q9BTL4">
    <property type="GO annotations" value="0 GO annotations based on evolutionary models"/>
</dbReference>
<dbReference type="PhylomeDB" id="Q9BTL4"/>
<dbReference type="PathwayCommons" id="Q9BTL4"/>
<dbReference type="SignaLink" id="Q9BTL4"/>
<dbReference type="BioGRID-ORCS" id="9592">
    <property type="hits" value="30 hits in 1155 CRISPR screens"/>
</dbReference>
<dbReference type="ChiTaRS" id="IER2">
    <property type="organism name" value="human"/>
</dbReference>
<dbReference type="GenomeRNAi" id="9592"/>
<dbReference type="Pharos" id="Q9BTL4">
    <property type="development level" value="Tbio"/>
</dbReference>
<dbReference type="PRO" id="PR:Q9BTL4"/>
<dbReference type="Proteomes" id="UP000005640">
    <property type="component" value="Chromosome 19"/>
</dbReference>
<dbReference type="RNAct" id="Q9BTL4">
    <property type="molecule type" value="protein"/>
</dbReference>
<dbReference type="Bgee" id="ENSG00000160888">
    <property type="expression patterns" value="Expressed in nipple and 212 other cell types or tissues"/>
</dbReference>
<dbReference type="ExpressionAtlas" id="Q9BTL4">
    <property type="expression patterns" value="baseline and differential"/>
</dbReference>
<dbReference type="GO" id="GO:0005737">
    <property type="term" value="C:cytoplasm"/>
    <property type="evidence" value="ECO:0000314"/>
    <property type="project" value="UniProtKB"/>
</dbReference>
<dbReference type="GO" id="GO:0005654">
    <property type="term" value="C:nucleoplasm"/>
    <property type="evidence" value="ECO:0000314"/>
    <property type="project" value="HPA"/>
</dbReference>
<dbReference type="GO" id="GO:0005634">
    <property type="term" value="C:nucleus"/>
    <property type="evidence" value="ECO:0000314"/>
    <property type="project" value="UniProtKB"/>
</dbReference>
<dbReference type="GO" id="GO:0003677">
    <property type="term" value="F:DNA binding"/>
    <property type="evidence" value="ECO:0007669"/>
    <property type="project" value="UniProtKB-KW"/>
</dbReference>
<dbReference type="GO" id="GO:0048870">
    <property type="term" value="P:cell motility"/>
    <property type="evidence" value="ECO:0000315"/>
    <property type="project" value="UniProtKB"/>
</dbReference>
<dbReference type="GO" id="GO:0030182">
    <property type="term" value="P:neuron differentiation"/>
    <property type="evidence" value="ECO:0000250"/>
    <property type="project" value="UniProtKB"/>
</dbReference>
<dbReference type="GO" id="GO:0045944">
    <property type="term" value="P:positive regulation of transcription by RNA polymerase II"/>
    <property type="evidence" value="ECO:0000314"/>
    <property type="project" value="NTNU_SB"/>
</dbReference>
<dbReference type="GO" id="GO:0071774">
    <property type="term" value="P:response to fibroblast growth factor"/>
    <property type="evidence" value="ECO:0000250"/>
    <property type="project" value="UniProtKB"/>
</dbReference>
<dbReference type="InterPro" id="IPR008653">
    <property type="entry name" value="IER"/>
</dbReference>
<dbReference type="PANTHER" id="PTHR15895">
    <property type="entry name" value="IMMEDIATE EARLY RESPONSE GENE"/>
    <property type="match status" value="1"/>
</dbReference>
<dbReference type="Pfam" id="PF05760">
    <property type="entry name" value="IER"/>
    <property type="match status" value="1"/>
</dbReference>
<comment type="function">
    <text evidence="1 2 4 6">DNA-binding protein that seems to act as a transcription factor (PubMed:19584537). Involved in the regulation of neuronal differentiation, acts upon JNK-signaling pathway activation and plays a role in neurite outgrowth in hippocampal cells (By similarity). May mediate with FIBP FGF-signaling in the establishment of laterality in the embryo (By similarity). Promotes cell motility, seems to stimulate tumor metastasis (PubMed:22120713).</text>
</comment>
<comment type="interaction">
    <interactant intactId="EBI-2806011">
        <id>Q9BTL4</id>
    </interactant>
    <interactant intactId="EBI-746742">
        <id>O94817</id>
        <label>ATG12</label>
    </interactant>
    <organismsDiffer>false</organismsDiffer>
    <experiments>3</experiments>
</comment>
<comment type="interaction">
    <interactant intactId="EBI-2806011">
        <id>Q9BTL4</id>
    </interactant>
    <interactant intactId="EBI-7116203">
        <id>O75031</id>
        <label>HSF2BP</label>
    </interactant>
    <organismsDiffer>false</organismsDiffer>
    <experiments>3</experiments>
</comment>
<comment type="subcellular location">
    <subcellularLocation>
        <location evidence="6">Cytoplasm</location>
    </subcellularLocation>
    <subcellularLocation>
        <location evidence="6">Nucleus</location>
    </subcellularLocation>
    <text evidence="6">Cytoplasmic during quiescence, translocates to the nucleus upon stimulation.</text>
</comment>
<comment type="tissue specificity">
    <text evidence="6">Expressed in activated T-cells (at protein level) (PubMed:22120713). Expression increases in metastatic tumor cells (at protein level) (PubMed:22120713).</text>
</comment>
<comment type="induction">
    <text evidence="5">By growth factors and 12-O-tetradecanoylphorbol-13-acetate (TPA).</text>
</comment>
<comment type="similarity">
    <text evidence="9">Belongs to the IER family.</text>
</comment>
<accession>Q9BTL4</accession>
<accession>Q03827</accession>
<accession>Q2TAZ2</accession>
<reference key="1">
    <citation type="journal article" date="1991" name="J. Biol. Chem.">
        <title>Expression of a novel immediate early gene during 12-O-tetradecanoylphorbol-13-acetate-induced macrophagic differentiation of HL-60 cells.</title>
        <authorList>
            <person name="Shimizu N."/>
            <person name="Ohta M."/>
            <person name="Fujiwara C."/>
            <person name="Sagara J."/>
            <person name="Mochizuki N."/>
            <person name="Oda T."/>
            <person name="Utlyama H."/>
        </authorList>
    </citation>
    <scope>NUCLEOTIDE SEQUENCE [MRNA]</scope>
    <scope>INDUCTION</scope>
    <scope>VARIANT VAL-133</scope>
    <source>
        <tissue>Promyelocytic leukemia</tissue>
    </source>
</reference>
<reference key="2">
    <citation type="submission" date="2004-05" db="EMBL/GenBank/DDBJ databases">
        <title>Cloning of human full open reading frames in Gateway(TM) system entry vector (pDONR201).</title>
        <authorList>
            <person name="Ebert L."/>
            <person name="Schick M."/>
            <person name="Neubert P."/>
            <person name="Schatten R."/>
            <person name="Henze S."/>
            <person name="Korn B."/>
        </authorList>
    </citation>
    <scope>NUCLEOTIDE SEQUENCE [LARGE SCALE MRNA]</scope>
</reference>
<reference key="3">
    <citation type="submission" date="2004-10" db="EMBL/GenBank/DDBJ databases">
        <title>Cloning of human full-length CDSs in BD Creator(TM) system donor vector.</title>
        <authorList>
            <person name="Kalnine N."/>
            <person name="Chen X."/>
            <person name="Rolfs A."/>
            <person name="Halleck A."/>
            <person name="Hines L."/>
            <person name="Eisenstein S."/>
            <person name="Koundinya M."/>
            <person name="Raphael J."/>
            <person name="Moreira D."/>
            <person name="Kelley T."/>
            <person name="LaBaer J."/>
            <person name="Lin Y."/>
            <person name="Phelan M."/>
            <person name="Farmer A."/>
        </authorList>
    </citation>
    <scope>NUCLEOTIDE SEQUENCE [LARGE SCALE MRNA]</scope>
</reference>
<reference key="4">
    <citation type="journal article" date="2004" name="Genome Res.">
        <title>The status, quality, and expansion of the NIH full-length cDNA project: the Mammalian Gene Collection (MGC).</title>
        <authorList>
            <consortium name="The MGC Project Team"/>
        </authorList>
    </citation>
    <scope>NUCLEOTIDE SEQUENCE [LARGE SCALE MRNA]</scope>
    <source>
        <tissue>Brain</tissue>
        <tissue>Duodenum</tissue>
        <tissue>Lymph</tissue>
    </source>
</reference>
<reference key="5">
    <citation type="journal article" date="2009" name="Biosci. Biotechnol. Biochem.">
        <title>Functional analyses of immediate early gene ETR101 expressed in yeast.</title>
        <authorList>
            <person name="Takaya T."/>
            <person name="Kasatani K."/>
            <person name="Noguchi S."/>
            <person name="Nikawa J."/>
        </authorList>
    </citation>
    <scope>FUNCTION</scope>
    <scope>DNA-BINDING</scope>
</reference>
<reference key="6">
    <citation type="journal article" date="2012" name="Oncogene">
        <title>The immediate early gene Ier2 promotes tumor cell motility and metastasis, and predicts poor survival of colorectal cancer patients.</title>
        <authorList>
            <person name="Neeb A."/>
            <person name="Wallbaum S."/>
            <person name="Novac N."/>
            <person name="Dukovic-Schulze S."/>
            <person name="Scholl I."/>
            <person name="Schreiber C."/>
            <person name="Schlag P."/>
            <person name="Moll J."/>
            <person name="Stein U."/>
            <person name="Sleeman J.P."/>
        </authorList>
    </citation>
    <scope>FUNCTION</scope>
    <scope>TISSUE SPECIFICITY</scope>
    <scope>SUBCELLULAR LOCATION</scope>
</reference>
<reference key="7">
    <citation type="journal article" date="2012" name="Proc. Natl. Acad. Sci. U.S.A.">
        <title>N-terminal acetylome analyses and functional insights of the N-terminal acetyltransferase NatB.</title>
        <authorList>
            <person name="Van Damme P."/>
            <person name="Lasa M."/>
            <person name="Polevoda B."/>
            <person name="Gazquez C."/>
            <person name="Elosegui-Artola A."/>
            <person name="Kim D.S."/>
            <person name="De Juan-Pardo E."/>
            <person name="Demeyer K."/>
            <person name="Hole K."/>
            <person name="Larrea E."/>
            <person name="Timmerman E."/>
            <person name="Prieto J."/>
            <person name="Arnesen T."/>
            <person name="Sherman F."/>
            <person name="Gevaert K."/>
            <person name="Aldabe R."/>
        </authorList>
    </citation>
    <scope>ACETYLATION [LARGE SCALE ANALYSIS] AT MET-1</scope>
    <scope>IDENTIFICATION BY MASS SPECTROMETRY [LARGE SCALE ANALYSIS]</scope>
</reference>
<protein>
    <recommendedName>
        <fullName>Immediate early response gene 2 protein</fullName>
    </recommendedName>
    <alternativeName>
        <fullName>Protein ETR101</fullName>
    </alternativeName>
</protein>
<sequence>MEVQKEAQRIMTLSVWKMYHSRMQRGGLRLHRSLQLSLVMRSARELYLSAKVEALEPEVSLPAALPSDPRLHPPREAESTAETATPDGEHPFPEPMDTQEAPTAEETSACCAPRPAKVSRKRRSSSLSDGGDAGLVPSKKARLEEKEEEEGASSEVADRLQPPPAQAEGAFPNLARVLQRRFSGLLNCSPAAPPTAPPACEAKPACRPADSMLNVLVRAVVAF</sequence>
<organism>
    <name type="scientific">Homo sapiens</name>
    <name type="common">Human</name>
    <dbReference type="NCBI Taxonomy" id="9606"/>
    <lineage>
        <taxon>Eukaryota</taxon>
        <taxon>Metazoa</taxon>
        <taxon>Chordata</taxon>
        <taxon>Craniata</taxon>
        <taxon>Vertebrata</taxon>
        <taxon>Euteleostomi</taxon>
        <taxon>Mammalia</taxon>
        <taxon>Eutheria</taxon>
        <taxon>Euarchontoglires</taxon>
        <taxon>Primates</taxon>
        <taxon>Haplorrhini</taxon>
        <taxon>Catarrhini</taxon>
        <taxon>Hominidae</taxon>
        <taxon>Homo</taxon>
    </lineage>
</organism>
<proteinExistence type="evidence at protein level"/>
<feature type="chain" id="PRO_0000190435" description="Immediate early response gene 2 protein">
    <location>
        <begin position="1"/>
        <end position="223"/>
    </location>
</feature>
<feature type="region of interest" description="Disordered" evidence="3">
    <location>
        <begin position="63"/>
        <end position="172"/>
    </location>
</feature>
<feature type="compositionally biased region" description="Basic and acidic residues" evidence="3">
    <location>
        <begin position="69"/>
        <end position="78"/>
    </location>
</feature>
<feature type="compositionally biased region" description="Low complexity" evidence="3">
    <location>
        <begin position="125"/>
        <end position="138"/>
    </location>
</feature>
<feature type="modified residue" description="N-acetylmethionine" evidence="11">
    <location>
        <position position="1"/>
    </location>
</feature>
<feature type="sequence variant" id="VAR_057581" description="In dbSNP:rs1042164." evidence="5">
    <original>A</original>
    <variation>V</variation>
    <location>
        <position position="133"/>
    </location>
</feature>
<feature type="sequence conflict" description="In Ref. 1; AAA35814." evidence="9" ref="1">
    <original>A</original>
    <variation>G</variation>
    <location>
        <position position="165"/>
    </location>
</feature>
<evidence type="ECO:0000250" key="1">
    <source>
        <dbReference type="UniProtKB" id="B7SXM5"/>
    </source>
</evidence>
<evidence type="ECO:0000250" key="2">
    <source>
        <dbReference type="UniProtKB" id="Q6P7D3"/>
    </source>
</evidence>
<evidence type="ECO:0000256" key="3">
    <source>
        <dbReference type="SAM" id="MobiDB-lite"/>
    </source>
</evidence>
<evidence type="ECO:0000269" key="4">
    <source>
    </source>
</evidence>
<evidence type="ECO:0000269" key="5">
    <source>
    </source>
</evidence>
<evidence type="ECO:0000269" key="6">
    <source>
    </source>
</evidence>
<evidence type="ECO:0000303" key="7">
    <source>
    </source>
</evidence>
<evidence type="ECO:0000303" key="8">
    <source>
    </source>
</evidence>
<evidence type="ECO:0000305" key="9"/>
<evidence type="ECO:0000312" key="10">
    <source>
        <dbReference type="HGNC" id="HGNC:28871"/>
    </source>
</evidence>
<evidence type="ECO:0007744" key="11">
    <source>
    </source>
</evidence>